<evidence type="ECO:0000255" key="1">
    <source>
        <dbReference type="HAMAP-Rule" id="MF_00815"/>
    </source>
</evidence>
<comment type="function">
    <text evidence="1">Produces ATP from ADP in the presence of a proton gradient across the membrane. The gamma chain is believed to be important in regulating ATPase activity and the flow of protons through the CF(0) complex.</text>
</comment>
<comment type="subunit">
    <text evidence="1">F-type ATPases have 2 components, CF(1) - the catalytic core - and CF(0) - the membrane proton channel. CF(1) has five subunits: alpha(3), beta(3), gamma(1), delta(1), epsilon(1). CF(0) has three main subunits: a, b and c.</text>
</comment>
<comment type="subcellular location">
    <subcellularLocation>
        <location evidence="1">Cell membrane</location>
        <topology evidence="1">Peripheral membrane protein</topology>
    </subcellularLocation>
</comment>
<comment type="similarity">
    <text evidence="1">Belongs to the ATPase gamma chain family.</text>
</comment>
<proteinExistence type="inferred from homology"/>
<protein>
    <recommendedName>
        <fullName evidence="1">ATP synthase gamma chain</fullName>
    </recommendedName>
    <alternativeName>
        <fullName evidence="1">ATP synthase F1 sector gamma subunit</fullName>
    </alternativeName>
    <alternativeName>
        <fullName evidence="1">F-ATPase gamma subunit</fullName>
    </alternativeName>
</protein>
<keyword id="KW-0066">ATP synthesis</keyword>
<keyword id="KW-1003">Cell membrane</keyword>
<keyword id="KW-0139">CF(1)</keyword>
<keyword id="KW-0375">Hydrogen ion transport</keyword>
<keyword id="KW-0406">Ion transport</keyword>
<keyword id="KW-0472">Membrane</keyword>
<keyword id="KW-0813">Transport</keyword>
<organism>
    <name type="scientific">Mycoplasma capricolum subsp. capricolum (strain California kid / ATCC 27343 / NCTC 10154)</name>
    <dbReference type="NCBI Taxonomy" id="340047"/>
    <lineage>
        <taxon>Bacteria</taxon>
        <taxon>Bacillati</taxon>
        <taxon>Mycoplasmatota</taxon>
        <taxon>Mollicutes</taxon>
        <taxon>Mycoplasmataceae</taxon>
        <taxon>Mycoplasma</taxon>
    </lineage>
</organism>
<sequence length="280" mass="31735">MPNLSGLKTEISSVRNISKITNAMQLVASAKLRKISKKVIDTHNYVSEVYSLFNDIIRQTDKSVFLKESNFKANKTLWVVINSNLGLCGGYNSNVNKLVLQNLKLEDEIFAIGSKAVSFFRSKKIKIKNQITDIDINFTNKKARSISNDLLDMYINHEFDEIKIVYTKFINNVTFEPAIIRIFPIIKLENNFKHSQSLVFEPDAEQILSSTILIYINAIIYGTIIESQVSEQASRRTAMENATNNGKNLEQTLSLKYNRQRQGAITQEISEIVSGANNKS</sequence>
<reference key="1">
    <citation type="submission" date="2005-09" db="EMBL/GenBank/DDBJ databases">
        <authorList>
            <person name="Glass J.I."/>
            <person name="Lartigue C."/>
            <person name="Pfannkoch C."/>
            <person name="Baden-Tillson H."/>
            <person name="Smith H.O."/>
            <person name="Venter J.C."/>
            <person name="Roske K."/>
            <person name="Wise K.S."/>
            <person name="Calcutt M.J."/>
            <person name="Nelson W.C."/>
            <person name="Nierman W.C."/>
        </authorList>
    </citation>
    <scope>NUCLEOTIDE SEQUENCE [LARGE SCALE GENOMIC DNA]</scope>
    <source>
        <strain>California kid / ATCC 27343 / NCTC 10154</strain>
    </source>
</reference>
<feature type="chain" id="PRO_1000053256" description="ATP synthase gamma chain">
    <location>
        <begin position="1"/>
        <end position="280"/>
    </location>
</feature>
<accession>Q2ST35</accession>
<dbReference type="EMBL" id="CP000123">
    <property type="protein sequence ID" value="ABC01392.1"/>
    <property type="molecule type" value="Genomic_DNA"/>
</dbReference>
<dbReference type="RefSeq" id="WP_011386983.1">
    <property type="nucleotide sequence ID" value="NC_007633.1"/>
</dbReference>
<dbReference type="SMR" id="Q2ST35"/>
<dbReference type="GeneID" id="23778962"/>
<dbReference type="KEGG" id="mcp:MCAP_0083"/>
<dbReference type="HOGENOM" id="CLU_050669_0_1_14"/>
<dbReference type="PhylomeDB" id="Q2ST35"/>
<dbReference type="Proteomes" id="UP000001928">
    <property type="component" value="Chromosome"/>
</dbReference>
<dbReference type="GO" id="GO:0005886">
    <property type="term" value="C:plasma membrane"/>
    <property type="evidence" value="ECO:0007669"/>
    <property type="project" value="UniProtKB-SubCell"/>
</dbReference>
<dbReference type="GO" id="GO:0045259">
    <property type="term" value="C:proton-transporting ATP synthase complex"/>
    <property type="evidence" value="ECO:0007669"/>
    <property type="project" value="UniProtKB-KW"/>
</dbReference>
<dbReference type="GO" id="GO:0005524">
    <property type="term" value="F:ATP binding"/>
    <property type="evidence" value="ECO:0007669"/>
    <property type="project" value="UniProtKB-UniRule"/>
</dbReference>
<dbReference type="GO" id="GO:0046933">
    <property type="term" value="F:proton-transporting ATP synthase activity, rotational mechanism"/>
    <property type="evidence" value="ECO:0007669"/>
    <property type="project" value="UniProtKB-UniRule"/>
</dbReference>
<dbReference type="GO" id="GO:0042777">
    <property type="term" value="P:proton motive force-driven plasma membrane ATP synthesis"/>
    <property type="evidence" value="ECO:0007669"/>
    <property type="project" value="UniProtKB-UniRule"/>
</dbReference>
<dbReference type="CDD" id="cd12151">
    <property type="entry name" value="F1-ATPase_gamma"/>
    <property type="match status" value="1"/>
</dbReference>
<dbReference type="Gene3D" id="3.40.1380.10">
    <property type="match status" value="1"/>
</dbReference>
<dbReference type="Gene3D" id="1.10.287.80">
    <property type="entry name" value="ATP synthase, gamma subunit, helix hairpin domain"/>
    <property type="match status" value="1"/>
</dbReference>
<dbReference type="HAMAP" id="MF_00815">
    <property type="entry name" value="ATP_synth_gamma_bact"/>
    <property type="match status" value="1"/>
</dbReference>
<dbReference type="InterPro" id="IPR035968">
    <property type="entry name" value="ATP_synth_F1_ATPase_gsu"/>
</dbReference>
<dbReference type="InterPro" id="IPR000131">
    <property type="entry name" value="ATP_synth_F1_gsu"/>
</dbReference>
<dbReference type="NCBIfam" id="TIGR01146">
    <property type="entry name" value="ATPsyn_F1gamma"/>
    <property type="match status" value="1"/>
</dbReference>
<dbReference type="PANTHER" id="PTHR11693">
    <property type="entry name" value="ATP SYNTHASE GAMMA CHAIN"/>
    <property type="match status" value="1"/>
</dbReference>
<dbReference type="PANTHER" id="PTHR11693:SF22">
    <property type="entry name" value="ATP SYNTHASE SUBUNIT GAMMA, MITOCHONDRIAL"/>
    <property type="match status" value="1"/>
</dbReference>
<dbReference type="Pfam" id="PF00231">
    <property type="entry name" value="ATP-synt"/>
    <property type="match status" value="1"/>
</dbReference>
<dbReference type="PRINTS" id="PR00126">
    <property type="entry name" value="ATPASEGAMMA"/>
</dbReference>
<dbReference type="SUPFAM" id="SSF52943">
    <property type="entry name" value="ATP synthase (F1-ATPase), gamma subunit"/>
    <property type="match status" value="1"/>
</dbReference>
<name>ATPG_MYCCT</name>
<gene>
    <name evidence="1" type="primary">atpG</name>
    <name type="ordered locus">MCAP_0083</name>
</gene>